<feature type="chain" id="PRO_1000012929" description="Lysine--tRNA ligase">
    <location>
        <begin position="1"/>
        <end position="500"/>
    </location>
</feature>
<feature type="binding site" evidence="1">
    <location>
        <position position="410"/>
    </location>
    <ligand>
        <name>Mg(2+)</name>
        <dbReference type="ChEBI" id="CHEBI:18420"/>
        <label>1</label>
    </ligand>
</feature>
<feature type="binding site" evidence="1">
    <location>
        <position position="417"/>
    </location>
    <ligand>
        <name>Mg(2+)</name>
        <dbReference type="ChEBI" id="CHEBI:18420"/>
        <label>1</label>
    </ligand>
</feature>
<feature type="binding site" evidence="1">
    <location>
        <position position="417"/>
    </location>
    <ligand>
        <name>Mg(2+)</name>
        <dbReference type="ChEBI" id="CHEBI:18420"/>
        <label>2</label>
    </ligand>
</feature>
<proteinExistence type="inferred from homology"/>
<organism>
    <name type="scientific">Shewanella loihica (strain ATCC BAA-1088 / PV-4)</name>
    <dbReference type="NCBI Taxonomy" id="323850"/>
    <lineage>
        <taxon>Bacteria</taxon>
        <taxon>Pseudomonadati</taxon>
        <taxon>Pseudomonadota</taxon>
        <taxon>Gammaproteobacteria</taxon>
        <taxon>Alteromonadales</taxon>
        <taxon>Shewanellaceae</taxon>
        <taxon>Shewanella</taxon>
    </lineage>
</organism>
<sequence>MTEQTQDENKLIAERRAKLDHVRASCPANGHPNNFDRKHKAADIQAEYGQYSKEELEEMNVQRSIAGRIMAKRGPFLVIQDVSGRIQAYAGKDVQKDLKAKYQGLDIGDIIGVTGQLHLSGKGDLYVNMEEYQLLTKALRPLPEKFHGLTDQETRYRQRYVDLIVNEESRAAFIMRSKVVTAIRNFMVSKEFMEVETPMMHSIPGGASARPFITHHNALDIEMYLRIAPELYLKRLVVGGFERVFEINRNFRNEGLSPRHNPEFTMMEFYMAYADYKDLMDLTEEMLSSIAKDLLGDTKLPYGEHTIDFGGPYERLSMLDAIKKYNPDNETIQSMTYEEVKDVEFMRNLAKSLGMTIEKFWTCGQLLEEIFGETAEPKLMQPTFITGYPADISPLARRNDENHFITDRFEFFIGGREVANGFSELNDAEDQDKRFKAQVDAKDAGDDEAMFYDADYITALEHGLPPTAGQGIGIDRLVMLFTNTHTIRDVILFPAMRPQG</sequence>
<protein>
    <recommendedName>
        <fullName evidence="1">Lysine--tRNA ligase</fullName>
        <ecNumber evidence="1">6.1.1.6</ecNumber>
    </recommendedName>
    <alternativeName>
        <fullName evidence="1">Lysyl-tRNA synthetase</fullName>
        <shortName evidence="1">LysRS</shortName>
    </alternativeName>
</protein>
<comment type="catalytic activity">
    <reaction evidence="1">
        <text>tRNA(Lys) + L-lysine + ATP = L-lysyl-tRNA(Lys) + AMP + diphosphate</text>
        <dbReference type="Rhea" id="RHEA:20792"/>
        <dbReference type="Rhea" id="RHEA-COMP:9696"/>
        <dbReference type="Rhea" id="RHEA-COMP:9697"/>
        <dbReference type="ChEBI" id="CHEBI:30616"/>
        <dbReference type="ChEBI" id="CHEBI:32551"/>
        <dbReference type="ChEBI" id="CHEBI:33019"/>
        <dbReference type="ChEBI" id="CHEBI:78442"/>
        <dbReference type="ChEBI" id="CHEBI:78529"/>
        <dbReference type="ChEBI" id="CHEBI:456215"/>
        <dbReference type="EC" id="6.1.1.6"/>
    </reaction>
</comment>
<comment type="cofactor">
    <cofactor evidence="1">
        <name>Mg(2+)</name>
        <dbReference type="ChEBI" id="CHEBI:18420"/>
    </cofactor>
    <text evidence="1">Binds 3 Mg(2+) ions per subunit.</text>
</comment>
<comment type="subunit">
    <text evidence="1">Homodimer.</text>
</comment>
<comment type="subcellular location">
    <subcellularLocation>
        <location evidence="1">Cytoplasm</location>
    </subcellularLocation>
</comment>
<comment type="similarity">
    <text evidence="1">Belongs to the class-II aminoacyl-tRNA synthetase family.</text>
</comment>
<reference key="1">
    <citation type="submission" date="2007-03" db="EMBL/GenBank/DDBJ databases">
        <title>Complete sequence of Shewanella loihica PV-4.</title>
        <authorList>
            <consortium name="US DOE Joint Genome Institute"/>
            <person name="Copeland A."/>
            <person name="Lucas S."/>
            <person name="Lapidus A."/>
            <person name="Barry K."/>
            <person name="Detter J.C."/>
            <person name="Glavina del Rio T."/>
            <person name="Hammon N."/>
            <person name="Israni S."/>
            <person name="Dalin E."/>
            <person name="Tice H."/>
            <person name="Pitluck S."/>
            <person name="Chain P."/>
            <person name="Malfatti S."/>
            <person name="Shin M."/>
            <person name="Vergez L."/>
            <person name="Schmutz J."/>
            <person name="Larimer F."/>
            <person name="Land M."/>
            <person name="Hauser L."/>
            <person name="Kyrpides N."/>
            <person name="Mikhailova N."/>
            <person name="Romine M.F."/>
            <person name="Serres G."/>
            <person name="Fredrickson J."/>
            <person name="Tiedje J."/>
            <person name="Richardson P."/>
        </authorList>
    </citation>
    <scope>NUCLEOTIDE SEQUENCE [LARGE SCALE GENOMIC DNA]</scope>
    <source>
        <strain>ATCC BAA-1088 / PV-4</strain>
    </source>
</reference>
<dbReference type="EC" id="6.1.1.6" evidence="1"/>
<dbReference type="EMBL" id="CP000606">
    <property type="protein sequence ID" value="ABO22684.1"/>
    <property type="molecule type" value="Genomic_DNA"/>
</dbReference>
<dbReference type="RefSeq" id="WP_011864618.1">
    <property type="nucleotide sequence ID" value="NC_009092.1"/>
</dbReference>
<dbReference type="SMR" id="A3QB36"/>
<dbReference type="STRING" id="323850.Shew_0812"/>
<dbReference type="KEGG" id="slo:Shew_0812"/>
<dbReference type="eggNOG" id="COG1190">
    <property type="taxonomic scope" value="Bacteria"/>
</dbReference>
<dbReference type="HOGENOM" id="CLU_008255_6_0_6"/>
<dbReference type="OrthoDB" id="9802326at2"/>
<dbReference type="Proteomes" id="UP000001558">
    <property type="component" value="Chromosome"/>
</dbReference>
<dbReference type="GO" id="GO:0005829">
    <property type="term" value="C:cytosol"/>
    <property type="evidence" value="ECO:0007669"/>
    <property type="project" value="TreeGrafter"/>
</dbReference>
<dbReference type="GO" id="GO:0005524">
    <property type="term" value="F:ATP binding"/>
    <property type="evidence" value="ECO:0007669"/>
    <property type="project" value="UniProtKB-UniRule"/>
</dbReference>
<dbReference type="GO" id="GO:0004824">
    <property type="term" value="F:lysine-tRNA ligase activity"/>
    <property type="evidence" value="ECO:0007669"/>
    <property type="project" value="UniProtKB-UniRule"/>
</dbReference>
<dbReference type="GO" id="GO:0000287">
    <property type="term" value="F:magnesium ion binding"/>
    <property type="evidence" value="ECO:0007669"/>
    <property type="project" value="UniProtKB-UniRule"/>
</dbReference>
<dbReference type="GO" id="GO:0000049">
    <property type="term" value="F:tRNA binding"/>
    <property type="evidence" value="ECO:0007669"/>
    <property type="project" value="TreeGrafter"/>
</dbReference>
<dbReference type="GO" id="GO:0006430">
    <property type="term" value="P:lysyl-tRNA aminoacylation"/>
    <property type="evidence" value="ECO:0007669"/>
    <property type="project" value="UniProtKB-UniRule"/>
</dbReference>
<dbReference type="CDD" id="cd00775">
    <property type="entry name" value="LysRS_core"/>
    <property type="match status" value="1"/>
</dbReference>
<dbReference type="CDD" id="cd04322">
    <property type="entry name" value="LysRS_N"/>
    <property type="match status" value="1"/>
</dbReference>
<dbReference type="FunFam" id="2.40.50.140:FF:000024">
    <property type="entry name" value="Lysine--tRNA ligase"/>
    <property type="match status" value="1"/>
</dbReference>
<dbReference type="FunFam" id="3.30.930.10:FF:000001">
    <property type="entry name" value="Lysine--tRNA ligase"/>
    <property type="match status" value="1"/>
</dbReference>
<dbReference type="Gene3D" id="3.30.930.10">
    <property type="entry name" value="Bira Bifunctional Protein, Domain 2"/>
    <property type="match status" value="1"/>
</dbReference>
<dbReference type="Gene3D" id="2.40.50.140">
    <property type="entry name" value="Nucleic acid-binding proteins"/>
    <property type="match status" value="1"/>
</dbReference>
<dbReference type="HAMAP" id="MF_00252">
    <property type="entry name" value="Lys_tRNA_synth_class2"/>
    <property type="match status" value="1"/>
</dbReference>
<dbReference type="InterPro" id="IPR004364">
    <property type="entry name" value="Aa-tRNA-synt_II"/>
</dbReference>
<dbReference type="InterPro" id="IPR006195">
    <property type="entry name" value="aa-tRNA-synth_II"/>
</dbReference>
<dbReference type="InterPro" id="IPR045864">
    <property type="entry name" value="aa-tRNA-synth_II/BPL/LPL"/>
</dbReference>
<dbReference type="InterPro" id="IPR002313">
    <property type="entry name" value="Lys-tRNA-ligase_II"/>
</dbReference>
<dbReference type="InterPro" id="IPR044136">
    <property type="entry name" value="Lys-tRNA-ligase_II_N"/>
</dbReference>
<dbReference type="InterPro" id="IPR018149">
    <property type="entry name" value="Lys-tRNA-synth_II_C"/>
</dbReference>
<dbReference type="InterPro" id="IPR012340">
    <property type="entry name" value="NA-bd_OB-fold"/>
</dbReference>
<dbReference type="InterPro" id="IPR004365">
    <property type="entry name" value="NA-bd_OB_tRNA"/>
</dbReference>
<dbReference type="NCBIfam" id="TIGR00499">
    <property type="entry name" value="lysS_bact"/>
    <property type="match status" value="1"/>
</dbReference>
<dbReference type="NCBIfam" id="NF001756">
    <property type="entry name" value="PRK00484.1"/>
    <property type="match status" value="1"/>
</dbReference>
<dbReference type="PANTHER" id="PTHR42918:SF15">
    <property type="entry name" value="LYSINE--TRNA LIGASE, CHLOROPLASTIC_MITOCHONDRIAL"/>
    <property type="match status" value="1"/>
</dbReference>
<dbReference type="PANTHER" id="PTHR42918">
    <property type="entry name" value="LYSYL-TRNA SYNTHETASE"/>
    <property type="match status" value="1"/>
</dbReference>
<dbReference type="Pfam" id="PF00152">
    <property type="entry name" value="tRNA-synt_2"/>
    <property type="match status" value="1"/>
</dbReference>
<dbReference type="Pfam" id="PF01336">
    <property type="entry name" value="tRNA_anti-codon"/>
    <property type="match status" value="1"/>
</dbReference>
<dbReference type="PRINTS" id="PR00982">
    <property type="entry name" value="TRNASYNTHLYS"/>
</dbReference>
<dbReference type="SUPFAM" id="SSF55681">
    <property type="entry name" value="Class II aaRS and biotin synthetases"/>
    <property type="match status" value="1"/>
</dbReference>
<dbReference type="SUPFAM" id="SSF50249">
    <property type="entry name" value="Nucleic acid-binding proteins"/>
    <property type="match status" value="1"/>
</dbReference>
<dbReference type="PROSITE" id="PS50862">
    <property type="entry name" value="AA_TRNA_LIGASE_II"/>
    <property type="match status" value="1"/>
</dbReference>
<evidence type="ECO:0000255" key="1">
    <source>
        <dbReference type="HAMAP-Rule" id="MF_00252"/>
    </source>
</evidence>
<name>SYK_SHELP</name>
<accession>A3QB36</accession>
<gene>
    <name evidence="1" type="primary">lysS</name>
    <name type="ordered locus">Shew_0812</name>
</gene>
<keyword id="KW-0030">Aminoacyl-tRNA synthetase</keyword>
<keyword id="KW-0067">ATP-binding</keyword>
<keyword id="KW-0963">Cytoplasm</keyword>
<keyword id="KW-0436">Ligase</keyword>
<keyword id="KW-0460">Magnesium</keyword>
<keyword id="KW-0479">Metal-binding</keyword>
<keyword id="KW-0547">Nucleotide-binding</keyword>
<keyword id="KW-0648">Protein biosynthesis</keyword>
<keyword id="KW-1185">Reference proteome</keyword>